<name>4HYPE_PLAL2</name>
<gene>
    <name evidence="5" type="ordered locus">Plim_2713</name>
</gene>
<sequence>MTYIPRQWIQVVDSHTGGEPTRLIYDGQHWPFAGSREGALTSQESPSPSVLSGLRKAIDRSSLILPKTMSERRQFLETEADWLRTASLLEPRGSDVLVGAILTPPEHASSQAGVVFCNNTGYLGMCGHGMIGVIVSLGQMGLIAPGPVTIDTPVGSIAATWSGSASVTLTNVWSYRYRHAVSLSVPGLGVVTGDIAWGGNWFFLIGEEVHQKSLDLGNLSDLLAYTSQIRSELGRQGIAGAQGAEIDHVELFASCDSSIADSQNFVLCPGGAYDRSPCGTGTSAKLACLVADGKVAEGGLWRQKSIVGSCFQAKALSIREGERGLEVLPQLTGEAYVTGVSTLQIDEADPFRWGILPPQ</sequence>
<organism>
    <name type="scientific">Planctopirus limnophila (strain ATCC 43296 / DSM 3776 / IFAM 1008 / Mu 290)</name>
    <name type="common">Planctomyces limnophilus</name>
    <dbReference type="NCBI Taxonomy" id="521674"/>
    <lineage>
        <taxon>Bacteria</taxon>
        <taxon>Pseudomonadati</taxon>
        <taxon>Planctomycetota</taxon>
        <taxon>Planctomycetia</taxon>
        <taxon>Planctomycetales</taxon>
        <taxon>Planctomycetaceae</taxon>
        <taxon>Planctopirus</taxon>
    </lineage>
</organism>
<comment type="function">
    <text evidence="2 4">Catalyzes the epimerization of trans-4-hydroxy-L-proline (t4LHyp) to cis-4-hydroxy-D-proline (c4DHyp). Is likely involved in a degradation pathway that converts t4LHyp to alpha-ketoglutarate. Displays no proline racemase activity.</text>
</comment>
<comment type="catalytic activity">
    <reaction evidence="2">
        <text>trans-4-hydroxy-L-proline = cis-4-hydroxy-D-proline</text>
        <dbReference type="Rhea" id="RHEA:21152"/>
        <dbReference type="ChEBI" id="CHEBI:57690"/>
        <dbReference type="ChEBI" id="CHEBI:58375"/>
        <dbReference type="EC" id="5.1.1.8"/>
    </reaction>
</comment>
<comment type="similarity">
    <text evidence="4">Belongs to the proline racemase family.</text>
</comment>
<reference key="1">
    <citation type="journal article" date="2010" name="Stand. Genomic Sci.">
        <title>Complete genome sequence of Planctomyces limnophilus type strain (Mu 290).</title>
        <authorList>
            <person name="Labutti K."/>
            <person name="Sikorski J."/>
            <person name="Schneider S."/>
            <person name="Nolan M."/>
            <person name="Lucas S."/>
            <person name="Glavina Del Rio T."/>
            <person name="Tice H."/>
            <person name="Cheng J.F."/>
            <person name="Goodwin L."/>
            <person name="Pitluck S."/>
            <person name="Liolios K."/>
            <person name="Ivanova N."/>
            <person name="Mavromatis K."/>
            <person name="Mikhailova N."/>
            <person name="Pati A."/>
            <person name="Chen A."/>
            <person name="Palaniappan K."/>
            <person name="Land M."/>
            <person name="Hauser L."/>
            <person name="Chang Y.J."/>
            <person name="Jeffries C.D."/>
            <person name="Tindall B.J."/>
            <person name="Rohde M."/>
            <person name="Goker M."/>
            <person name="Woyke T."/>
            <person name="Bristow J."/>
            <person name="Eisen J.A."/>
            <person name="Markowitz V."/>
            <person name="Hugenholtz P."/>
            <person name="Kyrpides N.C."/>
            <person name="Klenk H.P."/>
            <person name="Lapidus A."/>
        </authorList>
    </citation>
    <scope>NUCLEOTIDE SEQUENCE [LARGE SCALE GENOMIC DNA]</scope>
    <source>
        <strain>ATCC 43296 / DSM 3776 / IFAM 1008 / Mu 290</strain>
    </source>
</reference>
<reference key="2">
    <citation type="journal article" date="2014" name="Elife">
        <title>Prediction and characterization of enzymatic activities guided by sequence similarity and genome neighborhood networks.</title>
        <authorList>
            <person name="Zhao S."/>
            <person name="Sakai A."/>
            <person name="Zhang X."/>
            <person name="Vetting M.W."/>
            <person name="Kumar R."/>
            <person name="Hillerich B."/>
            <person name="San Francisco B."/>
            <person name="Solbiati J."/>
            <person name="Steves A."/>
            <person name="Brown S."/>
            <person name="Akiva E."/>
            <person name="Barber A."/>
            <person name="Seidel R.D."/>
            <person name="Babbitt P.C."/>
            <person name="Almo S.C."/>
            <person name="Gerlt J.A."/>
            <person name="Jacobson M.P."/>
        </authorList>
    </citation>
    <scope>FUNCTION</scope>
    <scope>CATALYTIC ACTIVITY</scope>
</reference>
<proteinExistence type="evidence at protein level"/>
<evidence type="ECO:0000250" key="1">
    <source>
        <dbReference type="UniProtKB" id="Q4KGU2"/>
    </source>
</evidence>
<evidence type="ECO:0000269" key="2">
    <source>
    </source>
</evidence>
<evidence type="ECO:0000303" key="3">
    <source>
    </source>
</evidence>
<evidence type="ECO:0000305" key="4"/>
<evidence type="ECO:0000312" key="5">
    <source>
        <dbReference type="EMBL" id="ADG68536.1"/>
    </source>
</evidence>
<dbReference type="EC" id="5.1.1.8" evidence="2"/>
<dbReference type="EMBL" id="CP001744">
    <property type="protein sequence ID" value="ADG68536.1"/>
    <property type="molecule type" value="Genomic_DNA"/>
</dbReference>
<dbReference type="RefSeq" id="WP_013110967.1">
    <property type="nucleotide sequence ID" value="NC_014148.1"/>
</dbReference>
<dbReference type="SMR" id="D5SQS4"/>
<dbReference type="STRING" id="521674.Plim_2713"/>
<dbReference type="KEGG" id="plm:Plim_2713"/>
<dbReference type="eggNOG" id="COG3938">
    <property type="taxonomic scope" value="Bacteria"/>
</dbReference>
<dbReference type="HOGENOM" id="CLU_036729_1_0_0"/>
<dbReference type="Proteomes" id="UP000002220">
    <property type="component" value="Chromosome"/>
</dbReference>
<dbReference type="GO" id="GO:0047580">
    <property type="term" value="F:4-hydroxyproline epimerase activity"/>
    <property type="evidence" value="ECO:0007669"/>
    <property type="project" value="UniProtKB-EC"/>
</dbReference>
<dbReference type="Gene3D" id="3.10.310.10">
    <property type="entry name" value="Diaminopimelate Epimerase, Chain A, domain 1"/>
    <property type="match status" value="2"/>
</dbReference>
<dbReference type="InterPro" id="IPR008794">
    <property type="entry name" value="Pro_racemase_fam"/>
</dbReference>
<dbReference type="PANTHER" id="PTHR33442">
    <property type="entry name" value="TRANS-3-HYDROXY-L-PROLINE DEHYDRATASE"/>
    <property type="match status" value="1"/>
</dbReference>
<dbReference type="PANTHER" id="PTHR33442:SF1">
    <property type="entry name" value="TRANS-3-HYDROXY-L-PROLINE DEHYDRATASE"/>
    <property type="match status" value="1"/>
</dbReference>
<dbReference type="Pfam" id="PF05544">
    <property type="entry name" value="Pro_racemase"/>
    <property type="match status" value="1"/>
</dbReference>
<dbReference type="PIRSF" id="PIRSF029792">
    <property type="entry name" value="Pro_racemase"/>
    <property type="match status" value="1"/>
</dbReference>
<dbReference type="SFLD" id="SFLDS00028">
    <property type="entry name" value="Proline_Racemase"/>
    <property type="match status" value="1"/>
</dbReference>
<dbReference type="SUPFAM" id="SSF54506">
    <property type="entry name" value="Diaminopimelate epimerase-like"/>
    <property type="match status" value="1"/>
</dbReference>
<feature type="chain" id="PRO_0000432263" description="4-hydroxyproline 2-epimerase">
    <location>
        <begin position="1"/>
        <end position="359"/>
    </location>
</feature>
<feature type="active site" description="Proton acceptor" evidence="1">
    <location>
        <position position="126"/>
    </location>
</feature>
<feature type="active site" description="Proton donor" evidence="1">
    <location>
        <position position="278"/>
    </location>
</feature>
<feature type="binding site" evidence="1">
    <location>
        <begin position="127"/>
        <end position="128"/>
    </location>
    <ligand>
        <name>substrate</name>
    </ligand>
</feature>
<feature type="binding site" evidence="1">
    <location>
        <position position="248"/>
    </location>
    <ligand>
        <name>substrate</name>
    </ligand>
</feature>
<feature type="binding site" evidence="1">
    <location>
        <position position="274"/>
    </location>
    <ligand>
        <name>substrate</name>
    </ligand>
</feature>
<feature type="binding site" evidence="1">
    <location>
        <begin position="279"/>
        <end position="280"/>
    </location>
    <ligand>
        <name>substrate</name>
    </ligand>
</feature>
<protein>
    <recommendedName>
        <fullName evidence="3">4-hydroxyproline 2-epimerase</fullName>
        <shortName>4Hyp 2-epimerase</shortName>
        <shortName evidence="3">4HypE</shortName>
        <ecNumber evidence="2">5.1.1.8</ecNumber>
    </recommendedName>
</protein>
<accession>D5SQS4</accession>
<keyword id="KW-0413">Isomerase</keyword>
<keyword id="KW-1185">Reference proteome</keyword>